<keyword id="KW-0067">ATP-binding</keyword>
<keyword id="KW-0119">Carbohydrate metabolism</keyword>
<keyword id="KW-0320">Glycogen biosynthesis</keyword>
<keyword id="KW-0321">Glycogen metabolism</keyword>
<keyword id="KW-0547">Nucleotide-binding</keyword>
<keyword id="KW-0548">Nucleotidyltransferase</keyword>
<keyword id="KW-1185">Reference proteome</keyword>
<keyword id="KW-0808">Transferase</keyword>
<evidence type="ECO:0000255" key="1">
    <source>
        <dbReference type="HAMAP-Rule" id="MF_00624"/>
    </source>
</evidence>
<accession>B5ZQ46</accession>
<comment type="function">
    <text evidence="1">Involved in the biosynthesis of ADP-glucose, a building block required for the elongation reactions to produce glycogen. Catalyzes the reaction between ATP and alpha-D-glucose 1-phosphate (G1P) to produce pyrophosphate and ADP-Glc.</text>
</comment>
<comment type="catalytic activity">
    <reaction evidence="1">
        <text>alpha-D-glucose 1-phosphate + ATP + H(+) = ADP-alpha-D-glucose + diphosphate</text>
        <dbReference type="Rhea" id="RHEA:12120"/>
        <dbReference type="ChEBI" id="CHEBI:15378"/>
        <dbReference type="ChEBI" id="CHEBI:30616"/>
        <dbReference type="ChEBI" id="CHEBI:33019"/>
        <dbReference type="ChEBI" id="CHEBI:57498"/>
        <dbReference type="ChEBI" id="CHEBI:58601"/>
        <dbReference type="EC" id="2.7.7.27"/>
    </reaction>
</comment>
<comment type="pathway">
    <text evidence="1">Glycan biosynthesis; glycogen biosynthesis.</text>
</comment>
<comment type="subunit">
    <text evidence="1">Homotetramer.</text>
</comment>
<comment type="similarity">
    <text evidence="1">Belongs to the bacterial/plant glucose-1-phosphate adenylyltransferase family.</text>
</comment>
<name>GLGC_RHILW</name>
<protein>
    <recommendedName>
        <fullName evidence="1">Glucose-1-phosphate adenylyltransferase</fullName>
        <ecNumber evidence="1">2.7.7.27</ecNumber>
    </recommendedName>
    <alternativeName>
        <fullName evidence="1">ADP-glucose pyrophosphorylase</fullName>
        <shortName evidence="1">ADPGlc PPase</shortName>
    </alternativeName>
    <alternativeName>
        <fullName evidence="1">ADP-glucose synthase</fullName>
    </alternativeName>
</protein>
<feature type="chain" id="PRO_1000130495" description="Glucose-1-phosphate adenylyltransferase">
    <location>
        <begin position="1"/>
        <end position="420"/>
    </location>
</feature>
<feature type="binding site" evidence="1">
    <location>
        <position position="107"/>
    </location>
    <ligand>
        <name>alpha-D-glucose 1-phosphate</name>
        <dbReference type="ChEBI" id="CHEBI:58601"/>
    </ligand>
</feature>
<feature type="binding site" evidence="1">
    <location>
        <position position="172"/>
    </location>
    <ligand>
        <name>alpha-D-glucose 1-phosphate</name>
        <dbReference type="ChEBI" id="CHEBI:58601"/>
    </ligand>
</feature>
<feature type="binding site" evidence="1">
    <location>
        <begin position="187"/>
        <end position="188"/>
    </location>
    <ligand>
        <name>alpha-D-glucose 1-phosphate</name>
        <dbReference type="ChEBI" id="CHEBI:58601"/>
    </ligand>
</feature>
<feature type="binding site" evidence="1">
    <location>
        <position position="205"/>
    </location>
    <ligand>
        <name>alpha-D-glucose 1-phosphate</name>
        <dbReference type="ChEBI" id="CHEBI:58601"/>
    </ligand>
</feature>
<organism>
    <name type="scientific">Rhizobium leguminosarum bv. trifolii (strain WSM2304)</name>
    <dbReference type="NCBI Taxonomy" id="395492"/>
    <lineage>
        <taxon>Bacteria</taxon>
        <taxon>Pseudomonadati</taxon>
        <taxon>Pseudomonadota</taxon>
        <taxon>Alphaproteobacteria</taxon>
        <taxon>Hyphomicrobiales</taxon>
        <taxon>Rhizobiaceae</taxon>
        <taxon>Rhizobium/Agrobacterium group</taxon>
        <taxon>Rhizobium</taxon>
    </lineage>
</organism>
<sequence length="420" mass="47091">MVEKRVQPLARDAMAYVLAGGRGSRLKELTDRRAKPAVYFGGKARIIDFALSNALNSGIRRIGVATQYKAHSLIRHMQRGWNFFRPERNESFDILPASQRVSETQWYEGTADAVYQNIDIIEDYGVEYMVILAGDHVYKMDYEWMLQQHVDSGADVTIGCLEVPRMEAVGFGVMHVNEKDEIIAFVEKPADPPPIPDKPDFALASMGIYVFHTKFLLDALRRDAADPNSSRDFGKDIIPYIVKNGKAVAHRFAKSCVRSDFEHEPYWRDVGTIDAYWQANIDLTAIVPELDIYDKSWPIWTYAEITPPAKFVHDDEDRRGSATSSVVSGDCIISGASLNNSLLFTGVRANSFSKLEGAVILPNVKIGRRAQLKNVVIDHGVVIPEGLVVGEDPKLDAKRFRRTESGICLITQPMIDKLDI</sequence>
<proteinExistence type="inferred from homology"/>
<gene>
    <name evidence="1" type="primary">glgC</name>
    <name type="ordered locus">Rleg2_3349</name>
</gene>
<reference key="1">
    <citation type="journal article" date="2010" name="Stand. Genomic Sci.">
        <title>Complete genome sequence of Rhizobium leguminosarum bv trifolii strain WSM2304, an effective microsymbiont of the South American clover Trifolium polymorphum.</title>
        <authorList>
            <person name="Reeve W."/>
            <person name="O'Hara G."/>
            <person name="Chain P."/>
            <person name="Ardley J."/>
            <person name="Brau L."/>
            <person name="Nandesena K."/>
            <person name="Tiwari R."/>
            <person name="Malfatti S."/>
            <person name="Kiss H."/>
            <person name="Lapidus A."/>
            <person name="Copeland A."/>
            <person name="Nolan M."/>
            <person name="Land M."/>
            <person name="Ivanova N."/>
            <person name="Mavromatis K."/>
            <person name="Markowitz V."/>
            <person name="Kyrpides N."/>
            <person name="Melino V."/>
            <person name="Denton M."/>
            <person name="Yates R."/>
            <person name="Howieson J."/>
        </authorList>
    </citation>
    <scope>NUCLEOTIDE SEQUENCE [LARGE SCALE GENOMIC DNA]</scope>
    <source>
        <strain>WSM2304</strain>
    </source>
</reference>
<dbReference type="EC" id="2.7.7.27" evidence="1"/>
<dbReference type="EMBL" id="CP001191">
    <property type="protein sequence ID" value="ACI56616.1"/>
    <property type="molecule type" value="Genomic_DNA"/>
</dbReference>
<dbReference type="RefSeq" id="WP_003585857.1">
    <property type="nucleotide sequence ID" value="NC_011369.1"/>
</dbReference>
<dbReference type="SMR" id="B5ZQ46"/>
<dbReference type="STRING" id="395492.Rleg2_3349"/>
<dbReference type="KEGG" id="rlt:Rleg2_3349"/>
<dbReference type="eggNOG" id="COG0448">
    <property type="taxonomic scope" value="Bacteria"/>
</dbReference>
<dbReference type="HOGENOM" id="CLU_029499_14_1_5"/>
<dbReference type="UniPathway" id="UPA00164"/>
<dbReference type="Proteomes" id="UP000008330">
    <property type="component" value="Chromosome"/>
</dbReference>
<dbReference type="GO" id="GO:0005524">
    <property type="term" value="F:ATP binding"/>
    <property type="evidence" value="ECO:0007669"/>
    <property type="project" value="UniProtKB-KW"/>
</dbReference>
<dbReference type="GO" id="GO:0008878">
    <property type="term" value="F:glucose-1-phosphate adenylyltransferase activity"/>
    <property type="evidence" value="ECO:0007669"/>
    <property type="project" value="UniProtKB-UniRule"/>
</dbReference>
<dbReference type="GO" id="GO:0005978">
    <property type="term" value="P:glycogen biosynthetic process"/>
    <property type="evidence" value="ECO:0007669"/>
    <property type="project" value="UniProtKB-UniRule"/>
</dbReference>
<dbReference type="CDD" id="cd02508">
    <property type="entry name" value="ADP_Glucose_PP"/>
    <property type="match status" value="1"/>
</dbReference>
<dbReference type="CDD" id="cd04651">
    <property type="entry name" value="LbH_G1P_AT_C"/>
    <property type="match status" value="1"/>
</dbReference>
<dbReference type="Gene3D" id="2.160.10.10">
    <property type="entry name" value="Hexapeptide repeat proteins"/>
    <property type="match status" value="1"/>
</dbReference>
<dbReference type="Gene3D" id="3.90.550.10">
    <property type="entry name" value="Spore Coat Polysaccharide Biosynthesis Protein SpsA, Chain A"/>
    <property type="match status" value="1"/>
</dbReference>
<dbReference type="HAMAP" id="MF_00624">
    <property type="entry name" value="GlgC"/>
    <property type="match status" value="1"/>
</dbReference>
<dbReference type="InterPro" id="IPR011831">
    <property type="entry name" value="ADP-Glc_PPase"/>
</dbReference>
<dbReference type="InterPro" id="IPR005836">
    <property type="entry name" value="ADP_Glu_pyroP_CS"/>
</dbReference>
<dbReference type="InterPro" id="IPR023049">
    <property type="entry name" value="GlgC_bac"/>
</dbReference>
<dbReference type="InterPro" id="IPR056818">
    <property type="entry name" value="GlmU/GlgC-like_hexapep"/>
</dbReference>
<dbReference type="InterPro" id="IPR005835">
    <property type="entry name" value="NTP_transferase_dom"/>
</dbReference>
<dbReference type="InterPro" id="IPR029044">
    <property type="entry name" value="Nucleotide-diphossugar_trans"/>
</dbReference>
<dbReference type="InterPro" id="IPR011004">
    <property type="entry name" value="Trimer_LpxA-like_sf"/>
</dbReference>
<dbReference type="NCBIfam" id="TIGR02091">
    <property type="entry name" value="glgC"/>
    <property type="match status" value="1"/>
</dbReference>
<dbReference type="NCBIfam" id="NF001947">
    <property type="entry name" value="PRK00725.1"/>
    <property type="match status" value="1"/>
</dbReference>
<dbReference type="NCBIfam" id="NF002023">
    <property type="entry name" value="PRK00844.1"/>
    <property type="match status" value="1"/>
</dbReference>
<dbReference type="PANTHER" id="PTHR43523:SF2">
    <property type="entry name" value="GLUCOSE-1-PHOSPHATE ADENYLYLTRANSFERASE"/>
    <property type="match status" value="1"/>
</dbReference>
<dbReference type="PANTHER" id="PTHR43523">
    <property type="entry name" value="GLUCOSE-1-PHOSPHATE ADENYLYLTRANSFERASE-RELATED"/>
    <property type="match status" value="1"/>
</dbReference>
<dbReference type="Pfam" id="PF24894">
    <property type="entry name" value="Hexapep_GlmU"/>
    <property type="match status" value="1"/>
</dbReference>
<dbReference type="Pfam" id="PF00483">
    <property type="entry name" value="NTP_transferase"/>
    <property type="match status" value="1"/>
</dbReference>
<dbReference type="SUPFAM" id="SSF53448">
    <property type="entry name" value="Nucleotide-diphospho-sugar transferases"/>
    <property type="match status" value="1"/>
</dbReference>
<dbReference type="SUPFAM" id="SSF51161">
    <property type="entry name" value="Trimeric LpxA-like enzymes"/>
    <property type="match status" value="1"/>
</dbReference>
<dbReference type="PROSITE" id="PS00808">
    <property type="entry name" value="ADP_GLC_PYROPHOSPH_1"/>
    <property type="match status" value="1"/>
</dbReference>
<dbReference type="PROSITE" id="PS00809">
    <property type="entry name" value="ADP_GLC_PYROPHOSPH_2"/>
    <property type="match status" value="1"/>
</dbReference>
<dbReference type="PROSITE" id="PS00810">
    <property type="entry name" value="ADP_GLC_PYROPHOSPH_3"/>
    <property type="match status" value="1"/>
</dbReference>